<dbReference type="EC" id="3.4.24.-" evidence="1"/>
<dbReference type="EMBL" id="FP565814">
    <property type="protein sequence ID" value="CBH24949.1"/>
    <property type="molecule type" value="Genomic_DNA"/>
</dbReference>
<dbReference type="RefSeq" id="WP_011404557.1">
    <property type="nucleotide sequence ID" value="NC_014032.1"/>
</dbReference>
<dbReference type="SMR" id="D5HA94"/>
<dbReference type="GeneID" id="83728757"/>
<dbReference type="KEGG" id="srm:SRM_02028"/>
<dbReference type="PATRIC" id="fig|761659.10.peg.2204"/>
<dbReference type="HOGENOM" id="CLU_000688_16_2_10"/>
<dbReference type="Proteomes" id="UP000000933">
    <property type="component" value="Chromosome"/>
</dbReference>
<dbReference type="GO" id="GO:0005886">
    <property type="term" value="C:plasma membrane"/>
    <property type="evidence" value="ECO:0007669"/>
    <property type="project" value="UniProtKB-SubCell"/>
</dbReference>
<dbReference type="GO" id="GO:0005524">
    <property type="term" value="F:ATP binding"/>
    <property type="evidence" value="ECO:0007669"/>
    <property type="project" value="UniProtKB-UniRule"/>
</dbReference>
<dbReference type="GO" id="GO:0016887">
    <property type="term" value="F:ATP hydrolysis activity"/>
    <property type="evidence" value="ECO:0007669"/>
    <property type="project" value="UniProtKB-UniRule"/>
</dbReference>
<dbReference type="GO" id="GO:0004176">
    <property type="term" value="F:ATP-dependent peptidase activity"/>
    <property type="evidence" value="ECO:0007669"/>
    <property type="project" value="InterPro"/>
</dbReference>
<dbReference type="GO" id="GO:0004222">
    <property type="term" value="F:metalloendopeptidase activity"/>
    <property type="evidence" value="ECO:0007669"/>
    <property type="project" value="InterPro"/>
</dbReference>
<dbReference type="GO" id="GO:0008270">
    <property type="term" value="F:zinc ion binding"/>
    <property type="evidence" value="ECO:0007669"/>
    <property type="project" value="UniProtKB-UniRule"/>
</dbReference>
<dbReference type="GO" id="GO:0030163">
    <property type="term" value="P:protein catabolic process"/>
    <property type="evidence" value="ECO:0007669"/>
    <property type="project" value="UniProtKB-UniRule"/>
</dbReference>
<dbReference type="GO" id="GO:0006508">
    <property type="term" value="P:proteolysis"/>
    <property type="evidence" value="ECO:0007669"/>
    <property type="project" value="UniProtKB-KW"/>
</dbReference>
<dbReference type="CDD" id="cd19501">
    <property type="entry name" value="RecA-like_FtsH"/>
    <property type="match status" value="1"/>
</dbReference>
<dbReference type="FunFam" id="1.10.8.60:FF:000001">
    <property type="entry name" value="ATP-dependent zinc metalloprotease FtsH"/>
    <property type="match status" value="1"/>
</dbReference>
<dbReference type="FunFam" id="1.20.58.760:FF:000001">
    <property type="entry name" value="ATP-dependent zinc metalloprotease FtsH"/>
    <property type="match status" value="1"/>
</dbReference>
<dbReference type="FunFam" id="3.40.50.300:FF:000001">
    <property type="entry name" value="ATP-dependent zinc metalloprotease FtsH"/>
    <property type="match status" value="1"/>
</dbReference>
<dbReference type="Gene3D" id="1.10.8.60">
    <property type="match status" value="1"/>
</dbReference>
<dbReference type="Gene3D" id="3.30.720.210">
    <property type="match status" value="1"/>
</dbReference>
<dbReference type="Gene3D" id="3.40.50.300">
    <property type="entry name" value="P-loop containing nucleotide triphosphate hydrolases"/>
    <property type="match status" value="1"/>
</dbReference>
<dbReference type="Gene3D" id="1.20.58.760">
    <property type="entry name" value="Peptidase M41"/>
    <property type="match status" value="1"/>
</dbReference>
<dbReference type="HAMAP" id="MF_01458">
    <property type="entry name" value="FtsH"/>
    <property type="match status" value="1"/>
</dbReference>
<dbReference type="InterPro" id="IPR003593">
    <property type="entry name" value="AAA+_ATPase"/>
</dbReference>
<dbReference type="InterPro" id="IPR041569">
    <property type="entry name" value="AAA_lid_3"/>
</dbReference>
<dbReference type="InterPro" id="IPR003959">
    <property type="entry name" value="ATPase_AAA_core"/>
</dbReference>
<dbReference type="InterPro" id="IPR003960">
    <property type="entry name" value="ATPase_AAA_CS"/>
</dbReference>
<dbReference type="InterPro" id="IPR005936">
    <property type="entry name" value="FtsH"/>
</dbReference>
<dbReference type="InterPro" id="IPR027417">
    <property type="entry name" value="P-loop_NTPase"/>
</dbReference>
<dbReference type="InterPro" id="IPR011546">
    <property type="entry name" value="Pept_M41_FtsH_extracell"/>
</dbReference>
<dbReference type="InterPro" id="IPR000642">
    <property type="entry name" value="Peptidase_M41"/>
</dbReference>
<dbReference type="InterPro" id="IPR037219">
    <property type="entry name" value="Peptidase_M41-like"/>
</dbReference>
<dbReference type="NCBIfam" id="TIGR01241">
    <property type="entry name" value="FtsH_fam"/>
    <property type="match status" value="1"/>
</dbReference>
<dbReference type="PANTHER" id="PTHR23076:SF97">
    <property type="entry name" value="ATP-DEPENDENT ZINC METALLOPROTEASE YME1L1"/>
    <property type="match status" value="1"/>
</dbReference>
<dbReference type="PANTHER" id="PTHR23076">
    <property type="entry name" value="METALLOPROTEASE M41 FTSH"/>
    <property type="match status" value="1"/>
</dbReference>
<dbReference type="Pfam" id="PF00004">
    <property type="entry name" value="AAA"/>
    <property type="match status" value="1"/>
</dbReference>
<dbReference type="Pfam" id="PF17862">
    <property type="entry name" value="AAA_lid_3"/>
    <property type="match status" value="1"/>
</dbReference>
<dbReference type="Pfam" id="PF06480">
    <property type="entry name" value="FtsH_ext"/>
    <property type="match status" value="1"/>
</dbReference>
<dbReference type="Pfam" id="PF01434">
    <property type="entry name" value="Peptidase_M41"/>
    <property type="match status" value="1"/>
</dbReference>
<dbReference type="SMART" id="SM00382">
    <property type="entry name" value="AAA"/>
    <property type="match status" value="1"/>
</dbReference>
<dbReference type="SUPFAM" id="SSF140990">
    <property type="entry name" value="FtsH protease domain-like"/>
    <property type="match status" value="1"/>
</dbReference>
<dbReference type="SUPFAM" id="SSF52540">
    <property type="entry name" value="P-loop containing nucleoside triphosphate hydrolases"/>
    <property type="match status" value="1"/>
</dbReference>
<dbReference type="PROSITE" id="PS00674">
    <property type="entry name" value="AAA"/>
    <property type="match status" value="1"/>
</dbReference>
<name>FTSH2_SALRM</name>
<comment type="function">
    <text evidence="1">Acts as a processive, ATP-dependent zinc metallopeptidase for both cytoplasmic and membrane proteins. Plays a role in the quality control of integral membrane proteins.</text>
</comment>
<comment type="cofactor">
    <cofactor evidence="1">
        <name>Zn(2+)</name>
        <dbReference type="ChEBI" id="CHEBI:29105"/>
    </cofactor>
    <text evidence="1">Binds 1 zinc ion per subunit.</text>
</comment>
<comment type="subunit">
    <text evidence="1">Homohexamer.</text>
</comment>
<comment type="subcellular location">
    <subcellularLocation>
        <location evidence="1">Cell inner membrane</location>
        <topology evidence="1">Multi-pass membrane protein</topology>
        <orientation evidence="1">Cytoplasmic side</orientation>
    </subcellularLocation>
</comment>
<comment type="similarity">
    <text evidence="1">In the central section; belongs to the AAA ATPase family.</text>
</comment>
<comment type="similarity">
    <text evidence="1">In the C-terminal section; belongs to the peptidase M41 family.</text>
</comment>
<keyword id="KW-0067">ATP-binding</keyword>
<keyword id="KW-0997">Cell inner membrane</keyword>
<keyword id="KW-1003">Cell membrane</keyword>
<keyword id="KW-0378">Hydrolase</keyword>
<keyword id="KW-0472">Membrane</keyword>
<keyword id="KW-0479">Metal-binding</keyword>
<keyword id="KW-0482">Metalloprotease</keyword>
<keyword id="KW-0547">Nucleotide-binding</keyword>
<keyword id="KW-0645">Protease</keyword>
<keyword id="KW-0812">Transmembrane</keyword>
<keyword id="KW-1133">Transmembrane helix</keyword>
<keyword id="KW-0862">Zinc</keyword>
<evidence type="ECO:0000255" key="1">
    <source>
        <dbReference type="HAMAP-Rule" id="MF_01458"/>
    </source>
</evidence>
<evidence type="ECO:0000256" key="2">
    <source>
        <dbReference type="SAM" id="MobiDB-lite"/>
    </source>
</evidence>
<gene>
    <name evidence="1" type="primary">ftsH2</name>
    <name type="ordered locus">SRM_02028</name>
</gene>
<organism>
    <name type="scientific">Salinibacter ruber (strain M8)</name>
    <dbReference type="NCBI Taxonomy" id="761659"/>
    <lineage>
        <taxon>Bacteria</taxon>
        <taxon>Pseudomonadati</taxon>
        <taxon>Rhodothermota</taxon>
        <taxon>Rhodothermia</taxon>
        <taxon>Rhodothermales</taxon>
        <taxon>Salinibacteraceae</taxon>
        <taxon>Salinibacter</taxon>
    </lineage>
</organism>
<protein>
    <recommendedName>
        <fullName evidence="1">ATP-dependent zinc metalloprotease FtsH 2</fullName>
        <ecNumber evidence="1">3.4.24.-</ecNumber>
    </recommendedName>
</protein>
<proteinExistence type="inferred from homology"/>
<sequence length="683" mass="74485">MADQTSQNDNQNGSGLPGGGPSGTGRGRLIIWVIAGTLLALWAYSYWGMGASGGERISYSEFRTQLQQENVERVEVKGNAINGSLKSQATRSEQGNTIEYQNFVTYLPSFGDEQLMDLLESQGVNVVTKPESSFPWGLVIMGLLPVLLLFGVGYIFLRRMQSQGQGLFSVRQSKAELYDKDEEDTTFDDVAGADSAKEELREIIKFLKNPKRFEGLGGKVPKGVLLVGPPGTGKTLLARAVAGEANAPFFSVSGSDFMEMFVGVGASRVRDMFSEAKETSPAIIFIDELDSIGRKRGAGLGGGNDEREQTLNQLLSELDGFEENEGVIVMAATNRPDILDSALTRPGRFDRQITVDLPTKQSRHEILKIHAREKPLSDDVDLEEIARSTPGFSGADLENLLNEAALLAGRHGHDAIQYSDIEQARDKVMMGLKRDGMVLDDEEKKLLAYHEAGHAIVGAVLPNADPVHKVTIVPRGKAMGVTQQLPEKDQYLYRHDYILDRLAVIMGGRAAEELIFDTATSGAENDLKQVRKMARKMVLDWGMGDQFKHISLGEDQGNVFLGDEIAKGREYSDDTAREVDEEIRRISEDAFQRAVDTLNEHHEAFDQLADMLIEQEEVSGKDVLNLVNGDTDEIGHMPTTNGAAASEENGSADDHEPDEATVIEEDGESGEGRASGSADASGS</sequence>
<reference key="1">
    <citation type="submission" date="2010-04" db="EMBL/GenBank/DDBJ databases">
        <title>Genome sequence of Salinibacter ruber M8.</title>
        <authorList>
            <consortium name="Genoscope"/>
        </authorList>
    </citation>
    <scope>NUCLEOTIDE SEQUENCE [LARGE SCALE GENOMIC DNA]</scope>
    <source>
        <strain>M8</strain>
    </source>
</reference>
<feature type="chain" id="PRO_0000400389" description="ATP-dependent zinc metalloprotease FtsH 2">
    <location>
        <begin position="1"/>
        <end position="683"/>
    </location>
</feature>
<feature type="topological domain" description="Cytoplasmic" evidence="1">
    <location>
        <begin position="1"/>
        <end position="28"/>
    </location>
</feature>
<feature type="transmembrane region" description="Helical" evidence="1">
    <location>
        <begin position="29"/>
        <end position="49"/>
    </location>
</feature>
<feature type="topological domain" description="Periplasmic" evidence="1">
    <location>
        <begin position="50"/>
        <end position="136"/>
    </location>
</feature>
<feature type="transmembrane region" description="Helical" evidence="1">
    <location>
        <begin position="137"/>
        <end position="157"/>
    </location>
</feature>
<feature type="topological domain" description="Cytoplasmic" evidence="1">
    <location>
        <begin position="158"/>
        <end position="683"/>
    </location>
</feature>
<feature type="region of interest" description="Disordered" evidence="2">
    <location>
        <begin position="1"/>
        <end position="21"/>
    </location>
</feature>
<feature type="region of interest" description="Disordered" evidence="2">
    <location>
        <begin position="627"/>
        <end position="683"/>
    </location>
</feature>
<feature type="compositionally biased region" description="Polar residues" evidence="2">
    <location>
        <begin position="1"/>
        <end position="12"/>
    </location>
</feature>
<feature type="compositionally biased region" description="Acidic residues" evidence="2">
    <location>
        <begin position="655"/>
        <end position="669"/>
    </location>
</feature>
<feature type="compositionally biased region" description="Low complexity" evidence="2">
    <location>
        <begin position="672"/>
        <end position="683"/>
    </location>
</feature>
<feature type="active site" evidence="1">
    <location>
        <position position="451"/>
    </location>
</feature>
<feature type="binding site" evidence="1">
    <location>
        <begin position="228"/>
        <end position="235"/>
    </location>
    <ligand>
        <name>ATP</name>
        <dbReference type="ChEBI" id="CHEBI:30616"/>
    </ligand>
</feature>
<feature type="binding site" evidence="1">
    <location>
        <position position="450"/>
    </location>
    <ligand>
        <name>Zn(2+)</name>
        <dbReference type="ChEBI" id="CHEBI:29105"/>
        <note>catalytic</note>
    </ligand>
</feature>
<feature type="binding site" evidence="1">
    <location>
        <position position="454"/>
    </location>
    <ligand>
        <name>Zn(2+)</name>
        <dbReference type="ChEBI" id="CHEBI:29105"/>
        <note>catalytic</note>
    </ligand>
</feature>
<feature type="binding site" evidence="1">
    <location>
        <position position="526"/>
    </location>
    <ligand>
        <name>Zn(2+)</name>
        <dbReference type="ChEBI" id="CHEBI:29105"/>
        <note>catalytic</note>
    </ligand>
</feature>
<accession>D5HA94</accession>